<sequence>MALPYHIFLFTVLLPSFTLTAPPPCRCMTSSSPYQEFLWRMQRPGNIDAPSYRSLSKGTPTFTAHTHMPRNCYHSATLCMHANTHYWTGKMINPSCPGGLGVTVCWTYFTQTGMSDGGGVQDQAREKHVKEVISQLTRVHGTSSPYKGLDLSKLHETLRTHTRLVSLFNTTLTGLHEVSAQNPTNCWICLPLNFRPYVSIPVPEQWNNFSTEINTTSVLVGPLVSNLEITHTSNLTCVKFSNTTYTTNSQCIRWVTPPTQIVCLPSGIFFVCGTSAYRCLNGSSESMCFLSFLVPPMTIYTEQDLYSYVISKPRNKRVPILPFVIGAGVLGALGTGIGGITTSTQFYYKLSQELNGDMERVADSLVTLQDQLNSLAAVVLQNRRALDLLTAERGGTCLFLGEECCYYVNQSGIVTEKVKEIRDRIQRRAEELRNTGPWGLLSQWMPWILPFLGPLAAIILLLLFGPCIFNLLVNFVSSRIEAVKLQMEPKMQSKTKIYRRPLDRPASPRSDVNDIKGTPPEEISAAQPLLRPNSAGSS</sequence>
<comment type="function">
    <text evidence="7 9 15">This endogenous retroviral envelope protein has retained its original fusogenic properties and participates in trophoblast fusion and the formation of a syncytium during placenta morphogenesis. May induce fusion through binding of SLC1A4 and SLC1A5 (PubMed:10708449, PubMed:12050356, PubMed:23492904).</text>
</comment>
<comment type="function">
    <text>Endogenous envelope proteins may have kept, lost or modified their original function during evolution. Retroviral envelope proteins mediate receptor recognition and membrane fusion during early infection. The surface protein (SU) mediates receptor recognition, while the transmembrane protein (TM) acts as a class I viral fusion protein. The protein may have at least 3 conformational states: pre-fusion native state, pre-hairpin intermediate state, and post-fusion hairpin state. During viral and target cell membrane fusion, the coiled coil regions (heptad repeats) assume a trimer-of-hairpins structure, positioning the fusion peptide in close proximity to the C-terminal region of the ectodomain. The formation of this structure appears to drive apposition and subsequent fusion of membranes.</text>
</comment>
<comment type="subunit">
    <text evidence="14">The mature envelope protein (Env) consists of a trimer of SU-TM heterodimers attached probably by a labile interchain disulfide bond. Interacts with the C-type lectin CD209/DC-SIGN.</text>
</comment>
<comment type="subcellular location">
    <molecule>Surface protein</molecule>
    <subcellularLocation>
        <location evidence="17">Cell membrane</location>
        <topology evidence="17">Peripheral membrane protein</topology>
    </subcellularLocation>
    <text evidence="17">The surface protein is not anchored to the membrane, but localizes to the extracellular surface through its binding to TM.</text>
</comment>
<comment type="subcellular location">
    <molecule>Transmembrane protein</molecule>
    <subcellularLocation>
        <location evidence="16">Cell membrane</location>
        <topology evidence="4">Single-pass type I membrane protein</topology>
    </subcellularLocation>
</comment>
<comment type="subcellular location">
    <molecule>Syncytin-1</molecule>
    <subcellularLocation>
        <location evidence="1">Virion</location>
    </subcellularLocation>
</comment>
<comment type="tissue specificity">
    <text evidence="6 7 11 13">Expressed at higher level in placental syncytiotrophoblast. Expressed at intermediate level in testis. Seems also to be found at low level in adrenal tissue, bone marrow, breast, colon, kidney, ovary, prostate, skin, spleen, thymus, thyroid, brain and trachea. Both mRNA and protein levels are significantly increased in the brain of individuals with multiple sclerosis, particularly in astrocytes and microglia.</text>
</comment>
<comment type="developmental stage">
    <text evidence="10">In placenta, detected at higher level during early pregnancy and at lower level during late pregnancy.</text>
</comment>
<comment type="domain">
    <text>The cytoplasmic region is essential for the fusiogenic function.</text>
</comment>
<comment type="domain">
    <text evidence="1">The 17 amino acids long immunosuppressive region is present in many retroviral envelope proteins. Synthetic peptides derived from this relatively conserved sequence inhibit immune function in vitro and in vivo (By similarity).</text>
</comment>
<comment type="PTM">
    <text evidence="14">Specific enzymatic cleavages in vivo yield mature proteins. Envelope glycoproteins are synthesized as an inactive precursor that is heavily N-glycosylated and processed likely by furin in the Golgi to yield the mature SU and TM proteins. The cleavage site between SU and TM requires the minimal sequence [KR]-X-[KR]-R. The intracytoplasmic tail cleavage by the viral protease that is required for the fusiogenic activity of some retroviruses envelope proteins seems to have been lost during evolution.</text>
</comment>
<comment type="PTM">
    <text evidence="17">The CXXC motif is highly conserved across a broad range of retroviral envelope proteins. It is thought to participate in the formation of a labile disulfide bond possibly with the CX6CC motif present in the transmembrane protein. Isomerization of the intersubunit disulfide bond to an SU intrachain disulfide bond is thought to occur upon receptor recognition in order to allow membrane fusion.</text>
</comment>
<comment type="polymorphism">
    <text>All variants have fusogenic properties.</text>
</comment>
<comment type="miscellaneous">
    <text>Probably involved in the development of multiple sclerosis (MS). MS is a neurodegenerative disease characterized by the gradual accumulation of focal plaques of demyelination particularly in the periventricular areas of the brain. It leads to physical and cognitive disabilities. Viral particles or intracellular RNA of HERV-W family members have been detected in tissue from patients with multiple sclerosis or schizophrenia.</text>
</comment>
<comment type="miscellaneous">
    <text>Orthologs in P.troglodytes, G.gorilla, P.pygmaeus and H.moloch.</text>
</comment>
<comment type="miscellaneous">
    <text>It can make pseudotypes with HIV-1 virions and confer infectivity. Can also induce cellular resistance to spleen necrosis virus in vitro.</text>
</comment>
<comment type="miscellaneous">
    <text>HERV-W family subgenomic RNAs have been observed.</text>
</comment>
<comment type="miscellaneous">
    <text>This provirus is intergenic, the closest flanking genes being ODAG and PEX1.</text>
</comment>
<comment type="miscellaneous">
    <text>The human genome contains a high percentage of proviral-like elements, also called endogenous retroviruses (ERVs) that are the genomic traces of ancient infections of the germline by exogenous retroviruses. Although most of these elements are defective, some have conserved a functional envelope (env) gene, most probably diverted by the host for its benefit.</text>
</comment>
<comment type="similarity">
    <text evidence="16">Belongs to the gamma type-C retroviral envelope protein family. HERV class-I W env subfamily.</text>
</comment>
<comment type="online information" name="Atlas of Genetics and Cytogenetics in Oncology and Haematology">
    <link uri="https://atlasgeneticsoncology.org/gene/40497/ERVWE1"/>
</comment>
<comment type="online information" name="Protein Spotlight">
    <link uri="https://www.proteinspotlight.org/back_issues/050"/>
    <text>A virus for life - Issue 50 of September 2004</text>
</comment>
<name>SYCY1_HUMAN</name>
<keyword id="KW-0002">3D-structure</keyword>
<keyword id="KW-1003">Cell membrane</keyword>
<keyword id="KW-0165">Cleavage on pair of basic residues</keyword>
<keyword id="KW-1015">Disulfide bond</keyword>
<keyword id="KW-0895">ERV</keyword>
<keyword id="KW-0325">Glycoprotein</keyword>
<keyword id="KW-0472">Membrane</keyword>
<keyword id="KW-1267">Proteomics identification</keyword>
<keyword id="KW-1185">Reference proteome</keyword>
<keyword id="KW-0732">Signal</keyword>
<keyword id="KW-0812">Transmembrane</keyword>
<keyword id="KW-1133">Transmembrane helix</keyword>
<keyword id="KW-0814">Transposable element</keyword>
<keyword id="KW-0261">Viral envelope protein</keyword>
<keyword id="KW-0946">Virion</keyword>
<evidence type="ECO:0000250" key="1"/>
<evidence type="ECO:0000250" key="2">
    <source>
        <dbReference type="UniProtKB" id="P23064"/>
    </source>
</evidence>
<evidence type="ECO:0000250" key="3">
    <source>
        <dbReference type="UniProtKB" id="P60508"/>
    </source>
</evidence>
<evidence type="ECO:0000255" key="4"/>
<evidence type="ECO:0000256" key="5">
    <source>
        <dbReference type="SAM" id="MobiDB-lite"/>
    </source>
</evidence>
<evidence type="ECO:0000269" key="6">
    <source>
    </source>
</evidence>
<evidence type="ECO:0000269" key="7">
    <source>
    </source>
</evidence>
<evidence type="ECO:0000269" key="8">
    <source>
    </source>
</evidence>
<evidence type="ECO:0000269" key="9">
    <source>
    </source>
</evidence>
<evidence type="ECO:0000269" key="10">
    <source>
    </source>
</evidence>
<evidence type="ECO:0000269" key="11">
    <source>
    </source>
</evidence>
<evidence type="ECO:0000269" key="12">
    <source>
    </source>
</evidence>
<evidence type="ECO:0000269" key="13">
    <source>
    </source>
</evidence>
<evidence type="ECO:0000269" key="14">
    <source>
    </source>
</evidence>
<evidence type="ECO:0000269" key="15">
    <source>
    </source>
</evidence>
<evidence type="ECO:0000305" key="16"/>
<evidence type="ECO:0000305" key="17">
    <source>
    </source>
</evidence>
<evidence type="ECO:0007829" key="18">
    <source>
        <dbReference type="PDB" id="5HA6"/>
    </source>
</evidence>
<evidence type="ECO:0007829" key="19">
    <source>
        <dbReference type="PDB" id="8OUH"/>
    </source>
</evidence>
<protein>
    <recommendedName>
        <fullName>Syncytin-1</fullName>
    </recommendedName>
    <alternativeName>
        <fullName>Endogenous retrovirus group W member 1</fullName>
    </alternativeName>
    <alternativeName>
        <fullName>Env-W</fullName>
    </alternativeName>
    <alternativeName>
        <fullName>Envelope polyprotein gPr73</fullName>
    </alternativeName>
    <alternativeName>
        <fullName>Enverin</fullName>
    </alternativeName>
    <alternativeName>
        <fullName>HERV-7q Envelope protein</fullName>
    </alternativeName>
    <alternativeName>
        <fullName>HERV-W envelope protein</fullName>
    </alternativeName>
    <alternativeName>
        <fullName>HERV-W_7q21.2 provirus ancestral Env polyprotein</fullName>
    </alternativeName>
    <alternativeName>
        <fullName>Syncytin</fullName>
    </alternativeName>
    <component>
        <recommendedName>
            <fullName>Surface protein</fullName>
            <shortName>SU</shortName>
        </recommendedName>
        <alternativeName>
            <fullName>gp50</fullName>
        </alternativeName>
    </component>
    <component>
        <recommendedName>
            <fullName>Transmembrane protein</fullName>
            <shortName>TM</shortName>
        </recommendedName>
        <alternativeName>
            <fullName>gp24</fullName>
        </alternativeName>
    </component>
</protein>
<dbReference type="EMBL" id="AF072503">
    <property type="status" value="NOT_ANNOTATED_CDS"/>
    <property type="molecule type" value="mRNA"/>
</dbReference>
<dbReference type="EMBL" id="AF072505">
    <property type="protein sequence ID" value="AAD14545.1"/>
    <property type="molecule type" value="mRNA"/>
</dbReference>
<dbReference type="EMBL" id="AF072506">
    <property type="protein sequence ID" value="AAD14546.2"/>
    <property type="molecule type" value="mRNA"/>
</dbReference>
<dbReference type="EMBL" id="AF072508">
    <property type="protein sequence ID" value="AAD14548.1"/>
    <property type="molecule type" value="mRNA"/>
</dbReference>
<dbReference type="EMBL" id="AF208161">
    <property type="protein sequence ID" value="AAF28334.1"/>
    <property type="molecule type" value="mRNA"/>
</dbReference>
<dbReference type="EMBL" id="AF513360">
    <property type="protein sequence ID" value="AAM47599.1"/>
    <property type="molecule type" value="mRNA"/>
</dbReference>
<dbReference type="EMBL" id="AF156963">
    <property type="protein sequence ID" value="AAF74215.1"/>
    <property type="molecule type" value="Genomic_DNA"/>
</dbReference>
<dbReference type="EMBL" id="AC007566">
    <property type="status" value="NOT_ANNOTATED_CDS"/>
    <property type="molecule type" value="Genomic_DNA"/>
</dbReference>
<dbReference type="EMBL" id="AY101582">
    <property type="protein sequence ID" value="AAM68161.1"/>
    <property type="molecule type" value="Genomic_DNA"/>
</dbReference>
<dbReference type="EMBL" id="AY101583">
    <property type="protein sequence ID" value="AAM68162.1"/>
    <property type="molecule type" value="Genomic_DNA"/>
</dbReference>
<dbReference type="EMBL" id="AY101584">
    <property type="protein sequence ID" value="AAM68163.1"/>
    <property type="molecule type" value="Genomic_DNA"/>
</dbReference>
<dbReference type="EMBL" id="AY101585">
    <property type="protein sequence ID" value="AAM68164.1"/>
    <property type="molecule type" value="Genomic_DNA"/>
</dbReference>
<dbReference type="EMBL" id="AF520478">
    <property type="protein sequence ID" value="AAQ17561.1"/>
    <property type="molecule type" value="Genomic_DNA"/>
</dbReference>
<dbReference type="EMBL" id="AF520480">
    <property type="protein sequence ID" value="AAQ17562.1"/>
    <property type="molecule type" value="Genomic_DNA"/>
</dbReference>
<dbReference type="EMBL" id="AF520482">
    <property type="protein sequence ID" value="AAQ17563.1"/>
    <property type="molecule type" value="Genomic_DNA"/>
</dbReference>
<dbReference type="EMBL" id="AF520484">
    <property type="protein sequence ID" value="AAQ17564.1"/>
    <property type="molecule type" value="Genomic_DNA"/>
</dbReference>
<dbReference type="EMBL" id="AF520486">
    <property type="protein sequence ID" value="AAQ17565.1"/>
    <property type="molecule type" value="Genomic_DNA"/>
</dbReference>
<dbReference type="EMBL" id="AF520488">
    <property type="protein sequence ID" value="AAQ17566.1"/>
    <property type="molecule type" value="Genomic_DNA"/>
</dbReference>
<dbReference type="EMBL" id="AF520490">
    <property type="protein sequence ID" value="AAQ17567.1"/>
    <property type="molecule type" value="Genomic_DNA"/>
</dbReference>
<dbReference type="EMBL" id="AF520492">
    <property type="protein sequence ID" value="AAQ17568.1"/>
    <property type="molecule type" value="Genomic_DNA"/>
</dbReference>
<dbReference type="EMBL" id="AF520494">
    <property type="protein sequence ID" value="AAQ17569.1"/>
    <property type="molecule type" value="Genomic_DNA"/>
</dbReference>
<dbReference type="EMBL" id="AF520496">
    <property type="protein sequence ID" value="AAQ17570.1"/>
    <property type="molecule type" value="Genomic_DNA"/>
</dbReference>
<dbReference type="EMBL" id="AF520498">
    <property type="protein sequence ID" value="AAQ17571.1"/>
    <property type="molecule type" value="Genomic_DNA"/>
</dbReference>
<dbReference type="EMBL" id="AF520500">
    <property type="protein sequence ID" value="AAQ17572.1"/>
    <property type="molecule type" value="Genomic_DNA"/>
</dbReference>
<dbReference type="EMBL" id="AF520502">
    <property type="protein sequence ID" value="AAQ17573.1"/>
    <property type="molecule type" value="Genomic_DNA"/>
</dbReference>
<dbReference type="EMBL" id="AF520504">
    <property type="protein sequence ID" value="AAQ17574.1"/>
    <property type="molecule type" value="Genomic_DNA"/>
</dbReference>
<dbReference type="EMBL" id="AF520506">
    <property type="protein sequence ID" value="AAQ17575.1"/>
    <property type="molecule type" value="Genomic_DNA"/>
</dbReference>
<dbReference type="EMBL" id="AF520508">
    <property type="protein sequence ID" value="AAQ17576.1"/>
    <property type="molecule type" value="Genomic_DNA"/>
</dbReference>
<dbReference type="EMBL" id="AF520510">
    <property type="protein sequence ID" value="AAQ17577.1"/>
    <property type="molecule type" value="Genomic_DNA"/>
</dbReference>
<dbReference type="EMBL" id="AF520512">
    <property type="protein sequence ID" value="AAQ17578.1"/>
    <property type="molecule type" value="Genomic_DNA"/>
</dbReference>
<dbReference type="EMBL" id="AF520514">
    <property type="protein sequence ID" value="AAQ17579.1"/>
    <property type="molecule type" value="Genomic_DNA"/>
</dbReference>
<dbReference type="EMBL" id="AF520516">
    <property type="protein sequence ID" value="AAQ17580.1"/>
    <property type="molecule type" value="Genomic_DNA"/>
</dbReference>
<dbReference type="EMBL" id="AF520518">
    <property type="protein sequence ID" value="AAQ17581.1"/>
    <property type="molecule type" value="Genomic_DNA"/>
</dbReference>
<dbReference type="EMBL" id="AF520520">
    <property type="protein sequence ID" value="AAQ17582.1"/>
    <property type="molecule type" value="Genomic_DNA"/>
</dbReference>
<dbReference type="EMBL" id="AF520522">
    <property type="protein sequence ID" value="AAQ17583.1"/>
    <property type="molecule type" value="Genomic_DNA"/>
</dbReference>
<dbReference type="EMBL" id="AF520524">
    <property type="protein sequence ID" value="AAQ17584.1"/>
    <property type="molecule type" value="Genomic_DNA"/>
</dbReference>
<dbReference type="EMBL" id="AF520526">
    <property type="protein sequence ID" value="AAQ17585.1"/>
    <property type="molecule type" value="Genomic_DNA"/>
</dbReference>
<dbReference type="EMBL" id="AF520528">
    <property type="protein sequence ID" value="AAQ17586.1"/>
    <property type="molecule type" value="Genomic_DNA"/>
</dbReference>
<dbReference type="EMBL" id="AF520530">
    <property type="protein sequence ID" value="AAQ17587.1"/>
    <property type="molecule type" value="Genomic_DNA"/>
</dbReference>
<dbReference type="EMBL" id="AF520532">
    <property type="protein sequence ID" value="AAQ17588.1"/>
    <property type="molecule type" value="Genomic_DNA"/>
</dbReference>
<dbReference type="EMBL" id="AF520534">
    <property type="protein sequence ID" value="AAQ17589.1"/>
    <property type="molecule type" value="Genomic_DNA"/>
</dbReference>
<dbReference type="EMBL" id="AF520536">
    <property type="protein sequence ID" value="AAQ17590.1"/>
    <property type="molecule type" value="Genomic_DNA"/>
</dbReference>
<dbReference type="EMBL" id="AF520538">
    <property type="protein sequence ID" value="AAQ17591.1"/>
    <property type="molecule type" value="Genomic_DNA"/>
</dbReference>
<dbReference type="EMBL" id="AF520540">
    <property type="protein sequence ID" value="AAQ17592.1"/>
    <property type="molecule type" value="Genomic_DNA"/>
</dbReference>
<dbReference type="EMBL" id="AF520542">
    <property type="protein sequence ID" value="AAQ17593.1"/>
    <property type="molecule type" value="Genomic_DNA"/>
</dbReference>
<dbReference type="EMBL" id="AF520544">
    <property type="protein sequence ID" value="AAQ17594.1"/>
    <property type="molecule type" value="Genomic_DNA"/>
</dbReference>
<dbReference type="EMBL" id="AF520546">
    <property type="protein sequence ID" value="AAQ17595.1"/>
    <property type="molecule type" value="Genomic_DNA"/>
</dbReference>
<dbReference type="EMBL" id="AF520548">
    <property type="protein sequence ID" value="AAQ17596.1"/>
    <property type="molecule type" value="Genomic_DNA"/>
</dbReference>
<dbReference type="EMBL" id="AF520550">
    <property type="protein sequence ID" value="AAQ17597.1"/>
    <property type="molecule type" value="Genomic_DNA"/>
</dbReference>
<dbReference type="EMBL" id="AF520552">
    <property type="protein sequence ID" value="AAQ17598.1"/>
    <property type="molecule type" value="Genomic_DNA"/>
</dbReference>
<dbReference type="EMBL" id="AF520554">
    <property type="protein sequence ID" value="AAQ17599.1"/>
    <property type="molecule type" value="Genomic_DNA"/>
</dbReference>
<dbReference type="EMBL" id="AF520556">
    <property type="protein sequence ID" value="AAQ17600.1"/>
    <property type="molecule type" value="Genomic_DNA"/>
</dbReference>
<dbReference type="EMBL" id="AF520558">
    <property type="protein sequence ID" value="AAQ17601.1"/>
    <property type="molecule type" value="Genomic_DNA"/>
</dbReference>
<dbReference type="EMBL" id="AF520560">
    <property type="protein sequence ID" value="AAQ17602.1"/>
    <property type="molecule type" value="Genomic_DNA"/>
</dbReference>
<dbReference type="EMBL" id="AF520562">
    <property type="protein sequence ID" value="AAQ17603.1"/>
    <property type="molecule type" value="Genomic_DNA"/>
</dbReference>
<dbReference type="EMBL" id="AF520564">
    <property type="protein sequence ID" value="AAQ17604.1"/>
    <property type="molecule type" value="Genomic_DNA"/>
</dbReference>
<dbReference type="EMBL" id="BC137381">
    <property type="protein sequence ID" value="AAI37382.1"/>
    <property type="molecule type" value="mRNA"/>
</dbReference>
<dbReference type="EMBL" id="AF506835">
    <property type="protein sequence ID" value="AAM33413.1"/>
    <property type="molecule type" value="mRNA"/>
</dbReference>
<dbReference type="CCDS" id="CCDS5626.1"/>
<dbReference type="RefSeq" id="NP_001124397.1">
    <property type="nucleotide sequence ID" value="NM_001130925.2"/>
</dbReference>
<dbReference type="RefSeq" id="NP_055405.3">
    <property type="nucleotide sequence ID" value="NM_014590.3"/>
</dbReference>
<dbReference type="PDB" id="5HA6">
    <property type="method" value="X-ray"/>
    <property type="resolution" value="2.00 A"/>
    <property type="chains" value="A/B=343-435"/>
</dbReference>
<dbReference type="PDB" id="6RX1">
    <property type="method" value="X-ray"/>
    <property type="resolution" value="2.10 A"/>
    <property type="chains" value="A=342-435"/>
</dbReference>
<dbReference type="PDB" id="8OUH">
    <property type="method" value="EM"/>
    <property type="resolution" value="2.62 A"/>
    <property type="chains" value="D=21-439"/>
</dbReference>
<dbReference type="PDB" id="8OUJ">
    <property type="method" value="EM"/>
    <property type="resolution" value="3.50 A"/>
    <property type="chains" value="D=21-439"/>
</dbReference>
<dbReference type="PDBsum" id="5HA6"/>
<dbReference type="PDBsum" id="6RX1"/>
<dbReference type="PDBsum" id="8OUH"/>
<dbReference type="PDBsum" id="8OUJ"/>
<dbReference type="EMDB" id="EMD-17192"/>
<dbReference type="EMDB" id="EMD-17194"/>
<dbReference type="SMR" id="Q9UQF0"/>
<dbReference type="BioGRID" id="119040">
    <property type="interactions" value="2"/>
</dbReference>
<dbReference type="FunCoup" id="Q9UQF0">
    <property type="interactions" value="5"/>
</dbReference>
<dbReference type="IntAct" id="Q9UQF0">
    <property type="interactions" value="2"/>
</dbReference>
<dbReference type="STRING" id="9606.ENSP00000419945"/>
<dbReference type="ChEMBL" id="CHEMBL4662944"/>
<dbReference type="GuidetoPHARMACOLOGY" id="3182"/>
<dbReference type="TCDB" id="1.G.9.1.1">
    <property type="family name" value="the syncytin (syncytin) family"/>
</dbReference>
<dbReference type="GlyCosmos" id="Q9UQF0">
    <property type="glycosylation" value="7 sites, No reported glycans"/>
</dbReference>
<dbReference type="GlyGen" id="Q9UQF0">
    <property type="glycosylation" value="7 sites"/>
</dbReference>
<dbReference type="iPTMnet" id="Q9UQF0"/>
<dbReference type="PhosphoSitePlus" id="Q9UQF0"/>
<dbReference type="BioMuta" id="ERVW-1"/>
<dbReference type="DMDM" id="47605755"/>
<dbReference type="jPOST" id="Q9UQF0"/>
<dbReference type="MassIVE" id="Q9UQF0"/>
<dbReference type="PaxDb" id="9606-ENSP00000419945"/>
<dbReference type="PeptideAtlas" id="Q9UQF0"/>
<dbReference type="ProteomicsDB" id="85550"/>
<dbReference type="Antibodypedia" id="29999">
    <property type="antibodies" value="240 antibodies from 24 providers"/>
</dbReference>
<dbReference type="DNASU" id="30816"/>
<dbReference type="Ensembl" id="ENST00000493463.2">
    <property type="protein sequence ID" value="ENSP00000419945.1"/>
    <property type="gene ID" value="ENSG00000242950.7"/>
</dbReference>
<dbReference type="Ensembl" id="ENST00000603053.2">
    <property type="protein sequence ID" value="ENSP00000474984.1"/>
    <property type="gene ID" value="ENSG00000242950.7"/>
</dbReference>
<dbReference type="GeneID" id="30816"/>
<dbReference type="KEGG" id="hsa:30816"/>
<dbReference type="MANE-Select" id="ENST00000603053.2">
    <property type="protein sequence ID" value="ENSP00000474984.1"/>
    <property type="RefSeq nucleotide sequence ID" value="NM_001130925.2"/>
    <property type="RefSeq protein sequence ID" value="NP_001124397.1"/>
</dbReference>
<dbReference type="UCSC" id="uc022ahe.2">
    <property type="organism name" value="human"/>
</dbReference>
<dbReference type="AGR" id="HGNC:13525"/>
<dbReference type="CTD" id="30816"/>
<dbReference type="DisGeNET" id="30816"/>
<dbReference type="GeneCards" id="ERVW-1"/>
<dbReference type="HGNC" id="HGNC:13525">
    <property type="gene designation" value="ERVW-1"/>
</dbReference>
<dbReference type="HPA" id="ENSG00000242950">
    <property type="expression patterns" value="Tissue enriched (placenta)"/>
</dbReference>
<dbReference type="MIM" id="604659">
    <property type="type" value="gene"/>
</dbReference>
<dbReference type="neXtProt" id="NX_Q9UQF0"/>
<dbReference type="OpenTargets" id="ENSG00000242950"/>
<dbReference type="PharmGKB" id="PA27878"/>
<dbReference type="VEuPathDB" id="HostDB:ENSG00000242950"/>
<dbReference type="eggNOG" id="ENOG502SD08">
    <property type="taxonomic scope" value="Eukaryota"/>
</dbReference>
<dbReference type="GeneTree" id="ENSGT00690000102286"/>
<dbReference type="HOGENOM" id="CLU_037857_0_0_1"/>
<dbReference type="InParanoid" id="Q9UQF0"/>
<dbReference type="OMA" id="WTYFTHT"/>
<dbReference type="OrthoDB" id="9633697at2759"/>
<dbReference type="PAN-GO" id="Q9UQF0">
    <property type="GO annotations" value="1 GO annotation based on evolutionary models"/>
</dbReference>
<dbReference type="PhylomeDB" id="Q9UQF0"/>
<dbReference type="TreeFam" id="TF332233"/>
<dbReference type="PathwayCommons" id="Q9UQF0"/>
<dbReference type="SignaLink" id="Q9UQF0"/>
<dbReference type="BioGRID-ORCS" id="30816">
    <property type="hits" value="348 hits in 1032 CRISPR screens"/>
</dbReference>
<dbReference type="ChiTaRS" id="ERVW-1">
    <property type="organism name" value="human"/>
</dbReference>
<dbReference type="GeneWiki" id="ERVWE1"/>
<dbReference type="GenomeRNAi" id="30816"/>
<dbReference type="Pharos" id="Q9UQF0">
    <property type="development level" value="Tbio"/>
</dbReference>
<dbReference type="PRO" id="PR:Q9UQF0"/>
<dbReference type="Proteomes" id="UP000005640">
    <property type="component" value="Chromosome 7"/>
</dbReference>
<dbReference type="RNAct" id="Q9UQF0">
    <property type="molecule type" value="protein"/>
</dbReference>
<dbReference type="Bgee" id="ENSG00000242950">
    <property type="expression patterns" value="Expressed in placenta and 103 other cell types or tissues"/>
</dbReference>
<dbReference type="ExpressionAtlas" id="Q9UQF0">
    <property type="expression patterns" value="baseline and differential"/>
</dbReference>
<dbReference type="GO" id="GO:0005886">
    <property type="term" value="C:plasma membrane"/>
    <property type="evidence" value="ECO:0007669"/>
    <property type="project" value="UniProtKB-SubCell"/>
</dbReference>
<dbReference type="GO" id="GO:0009653">
    <property type="term" value="P:anatomical structure morphogenesis"/>
    <property type="evidence" value="ECO:0000304"/>
    <property type="project" value="ProtInc"/>
</dbReference>
<dbReference type="GO" id="GO:0007520">
    <property type="term" value="P:myoblast fusion"/>
    <property type="evidence" value="ECO:0000315"/>
    <property type="project" value="MGI"/>
</dbReference>
<dbReference type="GO" id="GO:0006949">
    <property type="term" value="P:syncytium formation"/>
    <property type="evidence" value="ECO:0000314"/>
    <property type="project" value="UniProtKB"/>
</dbReference>
<dbReference type="GO" id="GO:0000768">
    <property type="term" value="P:syncytium formation by plasma membrane fusion"/>
    <property type="evidence" value="ECO:0000314"/>
    <property type="project" value="UniProtKB"/>
</dbReference>
<dbReference type="CDD" id="cd09851">
    <property type="entry name" value="HTLV-1-like_HR1-HR2"/>
    <property type="match status" value="1"/>
</dbReference>
<dbReference type="FunFam" id="1.10.287.210:FF:000002">
    <property type="entry name" value="Syncytin-2"/>
    <property type="match status" value="1"/>
</dbReference>
<dbReference type="Gene3D" id="1.10.287.210">
    <property type="match status" value="1"/>
</dbReference>
<dbReference type="InterPro" id="IPR018154">
    <property type="entry name" value="TLV/ENV_coat_polyprotein"/>
</dbReference>
<dbReference type="PANTHER" id="PTHR10424:SF48">
    <property type="entry name" value="SYNCYTIN-1"/>
    <property type="match status" value="1"/>
</dbReference>
<dbReference type="PANTHER" id="PTHR10424">
    <property type="entry name" value="VIRAL ENVELOPE PROTEIN"/>
    <property type="match status" value="1"/>
</dbReference>
<dbReference type="Pfam" id="PF00429">
    <property type="entry name" value="TLV_coat"/>
    <property type="match status" value="1"/>
</dbReference>
<dbReference type="SUPFAM" id="SSF58069">
    <property type="entry name" value="Virus ectodomain"/>
    <property type="match status" value="1"/>
</dbReference>
<feature type="signal peptide" evidence="4">
    <location>
        <begin position="1"/>
        <end position="20"/>
    </location>
</feature>
<feature type="chain" id="PRO_0000008485" description="Syncytin-1">
    <location>
        <begin position="21"/>
        <end position="538"/>
    </location>
</feature>
<feature type="chain" id="PRO_0000008486" description="Surface protein">
    <location>
        <begin position="21"/>
        <end position="317"/>
    </location>
</feature>
<feature type="chain" id="PRO_0000008487" description="Transmembrane protein">
    <location>
        <begin position="318"/>
        <end position="538"/>
    </location>
</feature>
<feature type="topological domain" description="Extracellular" evidence="4">
    <location>
        <begin position="21"/>
        <end position="443"/>
    </location>
</feature>
<feature type="transmembrane region" description="Helical" evidence="4">
    <location>
        <begin position="444"/>
        <end position="464"/>
    </location>
</feature>
<feature type="topological domain" description="Cytoplasmic" evidence="4">
    <location>
        <begin position="465"/>
        <end position="538"/>
    </location>
</feature>
<feature type="region of interest" description="Fusion peptide" evidence="4">
    <location>
        <begin position="320"/>
        <end position="340"/>
    </location>
</feature>
<feature type="region of interest" description="Immunosuppression" evidence="1">
    <location>
        <begin position="380"/>
        <end position="396"/>
    </location>
</feature>
<feature type="region of interest" description="Essential for the fusiogenic function">
    <location>
        <begin position="465"/>
        <end position="484"/>
    </location>
</feature>
<feature type="region of interest" description="Disordered" evidence="5">
    <location>
        <begin position="496"/>
        <end position="538"/>
    </location>
</feature>
<feature type="short sequence motif" description="CXXC" evidence="16">
    <location>
        <begin position="186"/>
        <end position="189"/>
    </location>
</feature>
<feature type="short sequence motif" description="CX6CC" evidence="16">
    <location>
        <begin position="397"/>
        <end position="406"/>
    </location>
</feature>
<feature type="site" description="Cleavage" evidence="14">
    <location>
        <begin position="317"/>
        <end position="318"/>
    </location>
</feature>
<feature type="glycosylation site" description="N-linked (GlcNAc...) asparagine" evidence="4">
    <location>
        <position position="169"/>
    </location>
</feature>
<feature type="glycosylation site" description="N-linked (GlcNAc...) asparagine" evidence="4">
    <location>
        <position position="208"/>
    </location>
</feature>
<feature type="glycosylation site" description="N-linked (GlcNAc...) asparagine" evidence="4">
    <location>
        <position position="214"/>
    </location>
</feature>
<feature type="glycosylation site" description="N-linked (GlcNAc...) asparagine" evidence="4">
    <location>
        <position position="234"/>
    </location>
</feature>
<feature type="glycosylation site" description="N-linked (GlcNAc...) asparagine" evidence="4">
    <location>
        <position position="242"/>
    </location>
</feature>
<feature type="glycosylation site" description="N-linked (GlcNAc...) asparagine" evidence="4">
    <location>
        <position position="281"/>
    </location>
</feature>
<feature type="glycosylation site" description="N-linked (GlcNAc...) asparagine" evidence="4">
    <location>
        <position position="409"/>
    </location>
</feature>
<feature type="disulfide bond" description="Interchain (between SU and TM chains, or C-189 with C-405); in linked form" evidence="17">
    <location>
        <begin position="186"/>
        <end position="405"/>
    </location>
</feature>
<feature type="disulfide bond" evidence="2">
    <location>
        <begin position="186"/>
        <end position="189"/>
    </location>
</feature>
<feature type="disulfide bond" evidence="3">
    <location>
        <begin position="397"/>
        <end position="404"/>
    </location>
</feature>
<feature type="sequence variant" id="VAR_018638" description="In dbSNP:rs142852059." evidence="12">
    <original>V</original>
    <variation>A</variation>
    <location>
        <position position="129"/>
    </location>
</feature>
<feature type="sequence variant" id="VAR_018639" description="In dbSNP:rs55903518." evidence="12">
    <original>R</original>
    <variation>Q</variation>
    <location>
        <position position="138"/>
    </location>
</feature>
<feature type="sequence variant" id="VAR_018640" description="In dbSNP:rs10266695." evidence="6 8 12">
    <original>S</original>
    <variation>N</variation>
    <location>
        <position position="307"/>
    </location>
</feature>
<feature type="sequence variant" id="VAR_018641" description="In dbSNP:rs141340741." evidence="12">
    <original>S</original>
    <variation>F</variation>
    <location>
        <position position="477"/>
    </location>
</feature>
<feature type="mutagenesis site" description="Complete loss of cleavage between SU and TM. Loss of fusiogenic function." evidence="14">
    <original>RNK</original>
    <variation>AAA</variation>
    <location>
        <begin position="314"/>
        <end position="316"/>
    </location>
</feature>
<feature type="mutagenesis site" description="Complete loss of cleavage between SU and TM. Loss of fusiogenic function." evidence="14">
    <original>R</original>
    <variation>T</variation>
    <location>
        <position position="317"/>
    </location>
</feature>
<feature type="mutagenesis site" description="Loss of fusiogenic function. No effect on cleavage between SU and TM." evidence="14">
    <original>C</original>
    <variation>A</variation>
    <location>
        <position position="405"/>
    </location>
</feature>
<feature type="sequence conflict" description="In Ref. 1; AAD14545." evidence="16" ref="1">
    <original>LL</original>
    <variation>VS</variation>
    <location>
        <begin position="13"/>
        <end position="14"/>
    </location>
</feature>
<feature type="sequence conflict" description="In Ref. 1; AAD14545." evidence="16" ref="1">
    <original>S</original>
    <variation>C</variation>
    <location>
        <position position="56"/>
    </location>
</feature>
<feature type="sequence conflict" description="In Ref. 1; AAD14545/AAD14548." evidence="16" ref="1">
    <original>T</original>
    <variation>A</variation>
    <location>
        <position position="298"/>
    </location>
</feature>
<feature type="sequence conflict" description="In Ref. 3; AAF74215." evidence="16" ref="3">
    <original>Q</original>
    <variation>R</variation>
    <location>
        <position position="381"/>
    </location>
</feature>
<feature type="sequence conflict" description="In Ref. 1; AAD14548." evidence="16" ref="1">
    <original>L</original>
    <variation>S</variation>
    <location>
        <position position="388"/>
    </location>
</feature>
<feature type="helix" evidence="19">
    <location>
        <begin position="33"/>
        <end position="41"/>
    </location>
</feature>
<feature type="turn" evidence="19">
    <location>
        <begin position="52"/>
        <end position="54"/>
    </location>
</feature>
<feature type="strand" evidence="19">
    <location>
        <begin position="62"/>
        <end position="66"/>
    </location>
</feature>
<feature type="helix" evidence="19">
    <location>
        <begin position="70"/>
        <end position="72"/>
    </location>
</feature>
<feature type="strand" evidence="19">
    <location>
        <begin position="77"/>
        <end position="81"/>
    </location>
</feature>
<feature type="strand" evidence="19">
    <location>
        <begin position="84"/>
        <end position="91"/>
    </location>
</feature>
<feature type="strand" evidence="19">
    <location>
        <begin position="103"/>
        <end position="109"/>
    </location>
</feature>
<feature type="helix" evidence="19">
    <location>
        <begin position="119"/>
        <end position="141"/>
    </location>
</feature>
<feature type="helix" evidence="18">
    <location>
        <begin position="343"/>
        <end position="389"/>
    </location>
</feature>
<feature type="helix" evidence="18">
    <location>
        <begin position="391"/>
        <end position="393"/>
    </location>
</feature>
<feature type="helix" evidence="18">
    <location>
        <begin position="396"/>
        <end position="400"/>
    </location>
</feature>
<feature type="helix" evidence="18">
    <location>
        <begin position="411"/>
        <end position="433"/>
    </location>
</feature>
<accession>Q9UQF0</accession>
<accession>B2RPD4</accession>
<accession>O95244</accession>
<accession>O95245</accession>
<accession>Q8NHY7</accession>
<accession>Q9NRZ2</accession>
<accession>Q9NZG3</accession>
<proteinExistence type="evidence at protein level"/>
<reference key="1">
    <citation type="journal article" date="1999" name="J. Virol.">
        <title>Molecular characterization and placental expression of HERV-W, a new human endogenous retrovirus family.</title>
        <authorList>
            <person name="Blond J.-L."/>
            <person name="Beseme F."/>
            <person name="Duret L."/>
            <person name="Bouton O."/>
            <person name="Bedin F."/>
            <person name="Perron H."/>
            <person name="Mandrand B."/>
            <person name="Mallet F."/>
        </authorList>
    </citation>
    <scope>NUCLEOTIDE SEQUENCE [MRNA]</scope>
    <source>
        <tissue>Placenta</tissue>
    </source>
</reference>
<reference key="2">
    <citation type="journal article" date="2000" name="Nature">
        <title>Syncytin is captive retroviral envelope protein involved in human placental morphogenesis.</title>
        <authorList>
            <person name="Sha M."/>
            <person name="Lee X."/>
            <person name="Li X.-P."/>
            <person name="Veldman G.M."/>
            <person name="Finnerty H."/>
            <person name="Racie L."/>
            <person name="LaVallie E."/>
            <person name="Tang X.-Y."/>
            <person name="Edouard P."/>
            <person name="Howes S."/>
            <person name="Keith J.C. Jr."/>
            <person name="McCoy J.M."/>
        </authorList>
    </citation>
    <scope>NUCLEOTIDE SEQUENCE [MRNA]</scope>
    <scope>TISSUE SPECIFICITY</scope>
    <scope>FUNCTION</scope>
    <scope>VARIANT ASN-307</scope>
    <source>
        <tissue>Testis</tissue>
    </source>
</reference>
<reference key="3">
    <citation type="journal article" date="2000" name="AIDS Res. Hum. Retroviruses">
        <title>Chromosomal distribution and coding capacity of the human endogenous retrovirus HERV-W family.</title>
        <authorList>
            <person name="Voisset C."/>
            <person name="Bouton O."/>
            <person name="Bedin F."/>
            <person name="Duret L."/>
            <person name="Mandrand B."/>
            <person name="Mallet F."/>
            <person name="Paranhos-Baccala G."/>
        </authorList>
    </citation>
    <scope>NUCLEOTIDE SEQUENCE [GENOMIC DNA]</scope>
</reference>
<reference key="4">
    <citation type="journal article" date="2004" name="Proc. Natl. Acad. Sci. U.S.A.">
        <title>The endogenous retroviral locus ERVWE1 is a bona fide gene involved in hominoid placental physiology.</title>
        <authorList>
            <person name="Mallet F."/>
            <person name="Bouton O."/>
            <person name="Prudhomme S."/>
            <person name="Cheynet V."/>
            <person name="Oriol G."/>
            <person name="Bonnaud B."/>
            <person name="Lucotte G."/>
            <person name="Duret L."/>
            <person name="Mandrand B."/>
        </authorList>
    </citation>
    <scope>NUCLEOTIDE SEQUENCE [GENOMIC DNA]</scope>
    <scope>VARIANTS ALA-129; GLN-138; ASN-307 AND PHE-477</scope>
</reference>
<reference key="5">
    <citation type="journal article" date="2003" name="Nature">
        <title>The DNA sequence of human chromosome 7.</title>
        <authorList>
            <person name="Hillier L.W."/>
            <person name="Fulton R.S."/>
            <person name="Fulton L.A."/>
            <person name="Graves T.A."/>
            <person name="Pepin K.H."/>
            <person name="Wagner-McPherson C."/>
            <person name="Layman D."/>
            <person name="Maas J."/>
            <person name="Jaeger S."/>
            <person name="Walker R."/>
            <person name="Wylie K."/>
            <person name="Sekhon M."/>
            <person name="Becker M.C."/>
            <person name="O'Laughlin M.D."/>
            <person name="Schaller M.E."/>
            <person name="Fewell G.A."/>
            <person name="Delehaunty K.D."/>
            <person name="Miner T.L."/>
            <person name="Nash W.E."/>
            <person name="Cordes M."/>
            <person name="Du H."/>
            <person name="Sun H."/>
            <person name="Edwards J."/>
            <person name="Bradshaw-Cordum H."/>
            <person name="Ali J."/>
            <person name="Andrews S."/>
            <person name="Isak A."/>
            <person name="Vanbrunt A."/>
            <person name="Nguyen C."/>
            <person name="Du F."/>
            <person name="Lamar B."/>
            <person name="Courtney L."/>
            <person name="Kalicki J."/>
            <person name="Ozersky P."/>
            <person name="Bielicki L."/>
            <person name="Scott K."/>
            <person name="Holmes A."/>
            <person name="Harkins R."/>
            <person name="Harris A."/>
            <person name="Strong C.M."/>
            <person name="Hou S."/>
            <person name="Tomlinson C."/>
            <person name="Dauphin-Kohlberg S."/>
            <person name="Kozlowicz-Reilly A."/>
            <person name="Leonard S."/>
            <person name="Rohlfing T."/>
            <person name="Rock S.M."/>
            <person name="Tin-Wollam A.-M."/>
            <person name="Abbott A."/>
            <person name="Minx P."/>
            <person name="Maupin R."/>
            <person name="Strowmatt C."/>
            <person name="Latreille P."/>
            <person name="Miller N."/>
            <person name="Johnson D."/>
            <person name="Murray J."/>
            <person name="Woessner J.P."/>
            <person name="Wendl M.C."/>
            <person name="Yang S.-P."/>
            <person name="Schultz B.R."/>
            <person name="Wallis J.W."/>
            <person name="Spieth J."/>
            <person name="Bieri T.A."/>
            <person name="Nelson J.O."/>
            <person name="Berkowicz N."/>
            <person name="Wohldmann P.E."/>
            <person name="Cook L.L."/>
            <person name="Hickenbotham M.T."/>
            <person name="Eldred J."/>
            <person name="Williams D."/>
            <person name="Bedell J.A."/>
            <person name="Mardis E.R."/>
            <person name="Clifton S.W."/>
            <person name="Chissoe S.L."/>
            <person name="Marra M.A."/>
            <person name="Raymond C."/>
            <person name="Haugen E."/>
            <person name="Gillett W."/>
            <person name="Zhou Y."/>
            <person name="James R."/>
            <person name="Phelps K."/>
            <person name="Iadanoto S."/>
            <person name="Bubb K."/>
            <person name="Simms E."/>
            <person name="Levy R."/>
            <person name="Clendenning J."/>
            <person name="Kaul R."/>
            <person name="Kent W.J."/>
            <person name="Furey T.S."/>
            <person name="Baertsch R.A."/>
            <person name="Brent M.R."/>
            <person name="Keibler E."/>
            <person name="Flicek P."/>
            <person name="Bork P."/>
            <person name="Suyama M."/>
            <person name="Bailey J.A."/>
            <person name="Portnoy M.E."/>
            <person name="Torrents D."/>
            <person name="Chinwalla A.T."/>
            <person name="Gish W.R."/>
            <person name="Eddy S.R."/>
            <person name="McPherson J.D."/>
            <person name="Olson M.V."/>
            <person name="Eichler E.E."/>
            <person name="Green E.D."/>
            <person name="Waterston R.H."/>
            <person name="Wilson R.K."/>
        </authorList>
    </citation>
    <scope>NUCLEOTIDE SEQUENCE [LARGE SCALE GENOMIC DNA]</scope>
</reference>
<reference key="6">
    <citation type="journal article" date="2004" name="Genome Res.">
        <title>The status, quality, and expansion of the NIH full-length cDNA project: the Mammalian Gene Collection (MGC).</title>
        <authorList>
            <consortium name="The MGC Project Team"/>
        </authorList>
    </citation>
    <scope>NUCLEOTIDE SEQUENCE [LARGE SCALE MRNA]</scope>
</reference>
<reference key="7">
    <citation type="journal article" date="2002" name="Cell. Mol. Biol.">
        <title>The HERV-W/7q family in the human genome. Potential for protein expression and gene regulation.</title>
        <authorList>
            <person name="Alliel P.M."/>
            <person name="Perin J.-P."/>
            <person name="Goudou D."/>
            <person name="Bitoun M."/>
            <person name="Robert B."/>
            <person name="Rieger F."/>
        </authorList>
    </citation>
    <scope>NUCLEOTIDE SEQUENCE [MRNA] OF 1-533</scope>
    <scope>VARIANT ASN-307</scope>
    <source>
        <tissue>Placenta</tissue>
    </source>
</reference>
<reference key="8">
    <citation type="journal article" date="1998" name="C. R. Acad. Sci. III, Sci. Vie">
        <title>Endogenous retroviruses and multiple sclerosis. II. HERV-7q.</title>
        <authorList>
            <person name="Alliel P.M."/>
            <person name="Perin J.-P."/>
            <person name="Pierig R."/>
            <person name="Nussbaum J.-L."/>
            <person name="Menard A."/>
            <person name="Rieger F."/>
        </authorList>
    </citation>
    <scope>IDENTIFICATION</scope>
</reference>
<reference key="9">
    <citation type="journal article" date="2000" name="J. Virol.">
        <title>An envelope glycoprotein of the human endogenous retrovirus HERV-W is expressed in the human placenta and fuses cells expressing the type D mammalian retrovirus receptor.</title>
        <authorList>
            <person name="Blond J.-L."/>
            <person name="Lavillette D."/>
            <person name="Cheynet V."/>
            <person name="Bouton O."/>
            <person name="Oriol G."/>
            <person name="Chapel-Fernandes S."/>
            <person name="Mandrand B."/>
            <person name="Mallet F."/>
            <person name="Cosset F.-L."/>
        </authorList>
    </citation>
    <scope>FUNCTION</scope>
    <scope>TISSUE SPECIFICITY</scope>
</reference>
<reference key="10">
    <citation type="journal article" date="2001" name="J. Virol.">
        <title>Envelope gene of the human endogenous retrovirus HERV-W encodes a functional retrovirus envelope.</title>
        <authorList>
            <person name="An D.S."/>
            <person name="Xie Y.-M."/>
            <person name="Chen I.S.Y."/>
        </authorList>
    </citation>
    <scope>FUNCTION</scope>
</reference>
<reference key="11">
    <citation type="journal article" date="2001" name="Virology">
        <title>Multiple sclerosis retrovirus particles and recombinant envelope trigger an abnormal immune response in vitro, by inducing polyclonal Vbeta16 T-lymphocyte activation.</title>
        <authorList>
            <person name="Perron H."/>
            <person name="Jouvin-Marche E."/>
            <person name="Michel M."/>
            <person name="Ounanian-Paraz A."/>
            <person name="Camelo S."/>
            <person name="Dumon A."/>
            <person name="Jolivet-Reynaud C."/>
            <person name="Marcel F."/>
            <person name="Souillet Y."/>
            <person name="Borel E."/>
            <person name="Gebuhrer L."/>
            <person name="Santoro L."/>
            <person name="Marcel S."/>
            <person name="Seigneurin J.M."/>
            <person name="Marche P.N."/>
            <person name="Lafon M."/>
        </authorList>
    </citation>
    <scope>FUNCTION</scope>
</reference>
<reference key="12">
    <citation type="journal article" date="2002" name="J. Virol.">
        <title>The envelope glycoprotein of human endogenous retrovirus type W uses a divergent family of amino acid transporters/cell surface receptors.</title>
        <authorList>
            <person name="Lavillette D."/>
            <person name="Marin M."/>
            <person name="Ruggieri A."/>
            <person name="Mallet F."/>
            <person name="Cosset F.-L."/>
            <person name="Kabat D."/>
        </authorList>
    </citation>
    <scope>FUNCTION</scope>
</reference>
<reference key="13">
    <citation type="journal article" date="2003" name="Proc. Natl. Acad. Sci. U.S.A.">
        <title>Genomewide screening for fusogenic human endogenous retrovirus envelopes identifies syncytin 2, a gene conserved on primate evolution.</title>
        <authorList>
            <person name="Blaise S."/>
            <person name="de Parseval N."/>
            <person name="Benit L."/>
            <person name="Heidmann T."/>
        </authorList>
    </citation>
    <scope>FUNCTION</scope>
</reference>
<reference key="14">
    <citation type="journal article" date="2003" name="Arch. Virol.">
        <title>The envelope glycoprotein of human endogenous retrovirus HERV-W induces cellular resistance to spleen necrosis virus.</title>
        <authorList>
            <person name="Ponferrada V.G."/>
            <person name="Mauck B.S."/>
            <person name="Wooley D.P."/>
        </authorList>
    </citation>
    <scope>FUNCTION</scope>
</reference>
<reference key="15">
    <citation type="journal article" date="2003" name="J. Virol.">
        <title>Survey of human genes of retroviral origin: identification and transcriptome of the genes with coding capacity for complete envelope proteins.</title>
        <authorList>
            <person name="de Parseval N."/>
            <person name="Lazar V."/>
            <person name="Casella J.-F."/>
            <person name="Benit L."/>
            <person name="Heidmann T."/>
        </authorList>
    </citation>
    <scope>TISSUE SPECIFICITY</scope>
</reference>
<reference key="16">
    <citation type="journal article" date="2003" name="Biol. Reprod.">
        <title>Temporal regulation of the expression of syncytin (HERV-W), maternally imprinted PEG10, and SGCE in human placenta.</title>
        <authorList>
            <person name="Smallwood A."/>
            <person name="Papageorghiou A."/>
            <person name="Nicolaides K."/>
            <person name="Alley M.K.R."/>
            <person name="Jim A."/>
            <person name="Nargund G."/>
            <person name="Ojha K."/>
            <person name="Campbell S."/>
            <person name="Banerjee S."/>
        </authorList>
    </citation>
    <scope>DEVELOPMENTAL STAGE</scope>
</reference>
<reference key="17">
    <citation type="journal article" date="2004" name="Mol. Biol. Evol.">
        <title>Evidence of selection on the domesticated ERVWE1 env retroviral element involved in placentation.</title>
        <authorList>
            <person name="Bonnaud B."/>
            <person name="Bouton O."/>
            <person name="Oriol G."/>
            <person name="Cheynet V."/>
            <person name="Duret L."/>
            <person name="Mallet F."/>
        </authorList>
    </citation>
    <scope>FUNCTION</scope>
</reference>
<reference key="18">
    <citation type="journal article" date="2004" name="Nat. Neurosci.">
        <title>Human endogenous retrovirus glycoprotein-mediated induction of redox reactants causes oligodendrocyte death and demyelination.</title>
        <authorList>
            <person name="Antony J.M."/>
            <person name="Van Marle G."/>
            <person name="Opii W."/>
            <person name="Butterfield D.A."/>
            <person name="Mallet F."/>
            <person name="Yong V.W."/>
            <person name="Wallace J.L."/>
            <person name="Deacon R.M."/>
            <person name="Warren K."/>
            <person name="Power C."/>
        </authorList>
    </citation>
    <scope>INVOLVEMENT IN MULTIPLE SCLEROSIS</scope>
    <scope>TISSUE SPECIFICITY</scope>
</reference>
<reference key="19">
    <citation type="journal article" date="2005" name="J. Virol.">
        <title>Synthesis, assembly, and processing of the Env ERVWE1/syncytin human endogenous retroviral envelope.</title>
        <authorList>
            <person name="Cheynet V."/>
            <person name="Ruggieri A."/>
            <person name="Oriol G."/>
            <person name="Blond J.-L."/>
            <person name="Boson B."/>
            <person name="Vachot L."/>
            <person name="Verrier B."/>
            <person name="Cosset F.-L."/>
            <person name="Mallet F."/>
        </authorList>
    </citation>
    <scope>PROTEOLYTIC PROCESSING OF POLYPROTEIN</scope>
    <scope>SUBUNIT</scope>
    <scope>INTERACTION WITH CD209/DC-SIGN</scope>
    <scope>MUTAGENESIS OF 314-ARG--LYS-316; ARG-317 AND CYS-405</scope>
</reference>
<reference key="20">
    <citation type="journal article" date="2013" name="Sci. Rep.">
        <title>A novel human endogenous retroviral protein inhibits cell-cell fusion.</title>
        <authorList>
            <person name="Sugimoto J."/>
            <person name="Sugimoto M."/>
            <person name="Bernstein H."/>
            <person name="Jinno Y."/>
            <person name="Schust D."/>
        </authorList>
    </citation>
    <scope>FUNCTION</scope>
</reference>
<gene>
    <name type="primary">ERVW-1</name>
    <name type="synonym">ERVWE1</name>
</gene>
<organism>
    <name type="scientific">Homo sapiens</name>
    <name type="common">Human</name>
    <dbReference type="NCBI Taxonomy" id="9606"/>
    <lineage>
        <taxon>Eukaryota</taxon>
        <taxon>Metazoa</taxon>
        <taxon>Chordata</taxon>
        <taxon>Craniata</taxon>
        <taxon>Vertebrata</taxon>
        <taxon>Euteleostomi</taxon>
        <taxon>Mammalia</taxon>
        <taxon>Eutheria</taxon>
        <taxon>Euarchontoglires</taxon>
        <taxon>Primates</taxon>
        <taxon>Haplorrhini</taxon>
        <taxon>Catarrhini</taxon>
        <taxon>Hominidae</taxon>
        <taxon>Homo</taxon>
    </lineage>
</organism>